<proteinExistence type="inferred from homology"/>
<protein>
    <recommendedName>
        <fullName>Serine/threonine-protein kinase TEL1</fullName>
        <ecNumber>2.7.11.1</ecNumber>
    </recommendedName>
    <alternativeName>
        <fullName>ATM homolog</fullName>
    </alternativeName>
    <alternativeName>
        <fullName>DNA-damage checkpoint kinase TEL1</fullName>
    </alternativeName>
    <alternativeName>
        <fullName>Telomere length regulation protein 1</fullName>
    </alternativeName>
</protein>
<accession>P0CP60</accession>
<accession>Q55QS4</accession>
<accession>Q5KFE0</accession>
<evidence type="ECO:0000250" key="1"/>
<evidence type="ECO:0000255" key="2">
    <source>
        <dbReference type="PROSITE-ProRule" id="PRU00269"/>
    </source>
</evidence>
<evidence type="ECO:0000255" key="3">
    <source>
        <dbReference type="PROSITE-ProRule" id="PRU00534"/>
    </source>
</evidence>
<evidence type="ECO:0000255" key="4">
    <source>
        <dbReference type="PROSITE-ProRule" id="PRU00535"/>
    </source>
</evidence>
<evidence type="ECO:0000256" key="5">
    <source>
        <dbReference type="SAM" id="MobiDB-lite"/>
    </source>
</evidence>
<evidence type="ECO:0000305" key="6"/>
<reference key="1">
    <citation type="journal article" date="2005" name="Science">
        <title>The genome of the basidiomycetous yeast and human pathogen Cryptococcus neoformans.</title>
        <authorList>
            <person name="Loftus B.J."/>
            <person name="Fung E."/>
            <person name="Roncaglia P."/>
            <person name="Rowley D."/>
            <person name="Amedeo P."/>
            <person name="Bruno D."/>
            <person name="Vamathevan J."/>
            <person name="Miranda M."/>
            <person name="Anderson I.J."/>
            <person name="Fraser J.A."/>
            <person name="Allen J.E."/>
            <person name="Bosdet I.E."/>
            <person name="Brent M.R."/>
            <person name="Chiu R."/>
            <person name="Doering T.L."/>
            <person name="Donlin M.J."/>
            <person name="D'Souza C.A."/>
            <person name="Fox D.S."/>
            <person name="Grinberg V."/>
            <person name="Fu J."/>
            <person name="Fukushima M."/>
            <person name="Haas B.J."/>
            <person name="Huang J.C."/>
            <person name="Janbon G."/>
            <person name="Jones S.J.M."/>
            <person name="Koo H.L."/>
            <person name="Krzywinski M.I."/>
            <person name="Kwon-Chung K.J."/>
            <person name="Lengeler K.B."/>
            <person name="Maiti R."/>
            <person name="Marra M.A."/>
            <person name="Marra R.E."/>
            <person name="Mathewson C.A."/>
            <person name="Mitchell T.G."/>
            <person name="Pertea M."/>
            <person name="Riggs F.R."/>
            <person name="Salzberg S.L."/>
            <person name="Schein J.E."/>
            <person name="Shvartsbeyn A."/>
            <person name="Shin H."/>
            <person name="Shumway M."/>
            <person name="Specht C.A."/>
            <person name="Suh B.B."/>
            <person name="Tenney A."/>
            <person name="Utterback T.R."/>
            <person name="Wickes B.L."/>
            <person name="Wortman J.R."/>
            <person name="Wye N.H."/>
            <person name="Kronstad J.W."/>
            <person name="Lodge J.K."/>
            <person name="Heitman J."/>
            <person name="Davis R.W."/>
            <person name="Fraser C.M."/>
            <person name="Hyman R.W."/>
        </authorList>
    </citation>
    <scope>NUCLEOTIDE SEQUENCE [LARGE SCALE GENOMIC DNA]</scope>
    <source>
        <strain>JEC21 / ATCC MYA-565</strain>
    </source>
</reference>
<name>ATM_CRYNJ</name>
<dbReference type="EC" id="2.7.11.1"/>
<dbReference type="EMBL" id="AE017346">
    <property type="protein sequence ID" value="AAW44228.2"/>
    <property type="status" value="ALT_SEQ"/>
    <property type="molecule type" value="Genomic_DNA"/>
</dbReference>
<dbReference type="RefSeq" id="XP_571535.1">
    <property type="nucleotide sequence ID" value="XM_571535.1"/>
</dbReference>
<dbReference type="SMR" id="P0CP60"/>
<dbReference type="STRING" id="214684.P0CP60"/>
<dbReference type="PaxDb" id="214684-P0CP60"/>
<dbReference type="eggNOG" id="KOG0892">
    <property type="taxonomic scope" value="Eukaryota"/>
</dbReference>
<dbReference type="HOGENOM" id="CLU_000178_11_0_1"/>
<dbReference type="InParanoid" id="P0CP60"/>
<dbReference type="Proteomes" id="UP000002149">
    <property type="component" value="Chromosome 6"/>
</dbReference>
<dbReference type="GO" id="GO:0005694">
    <property type="term" value="C:chromosome"/>
    <property type="evidence" value="ECO:0000318"/>
    <property type="project" value="GO_Central"/>
</dbReference>
<dbReference type="GO" id="GO:0000781">
    <property type="term" value="C:chromosome, telomeric region"/>
    <property type="evidence" value="ECO:0007669"/>
    <property type="project" value="UniProtKB-SubCell"/>
</dbReference>
<dbReference type="GO" id="GO:0005634">
    <property type="term" value="C:nucleus"/>
    <property type="evidence" value="ECO:0000318"/>
    <property type="project" value="GO_Central"/>
</dbReference>
<dbReference type="GO" id="GO:0005524">
    <property type="term" value="F:ATP binding"/>
    <property type="evidence" value="ECO:0007669"/>
    <property type="project" value="UniProtKB-KW"/>
</dbReference>
<dbReference type="GO" id="GO:0106310">
    <property type="term" value="F:protein serine kinase activity"/>
    <property type="evidence" value="ECO:0007669"/>
    <property type="project" value="RHEA"/>
</dbReference>
<dbReference type="GO" id="GO:0004674">
    <property type="term" value="F:protein serine/threonine kinase activity"/>
    <property type="evidence" value="ECO:0000318"/>
    <property type="project" value="GO_Central"/>
</dbReference>
<dbReference type="GO" id="GO:0031267">
    <property type="term" value="F:small GTPase binding"/>
    <property type="evidence" value="ECO:0007669"/>
    <property type="project" value="InterPro"/>
</dbReference>
<dbReference type="GO" id="GO:0006325">
    <property type="term" value="P:chromatin organization"/>
    <property type="evidence" value="ECO:0007669"/>
    <property type="project" value="UniProtKB-KW"/>
</dbReference>
<dbReference type="GO" id="GO:0000077">
    <property type="term" value="P:DNA damage checkpoint signaling"/>
    <property type="evidence" value="ECO:0000318"/>
    <property type="project" value="GO_Central"/>
</dbReference>
<dbReference type="GO" id="GO:0006302">
    <property type="term" value="P:double-strand break repair"/>
    <property type="evidence" value="ECO:0000318"/>
    <property type="project" value="GO_Central"/>
</dbReference>
<dbReference type="GO" id="GO:0006886">
    <property type="term" value="P:intracellular protein transport"/>
    <property type="evidence" value="ECO:0007669"/>
    <property type="project" value="InterPro"/>
</dbReference>
<dbReference type="GO" id="GO:0000723">
    <property type="term" value="P:telomere maintenance"/>
    <property type="evidence" value="ECO:0000318"/>
    <property type="project" value="GO_Central"/>
</dbReference>
<dbReference type="CDD" id="cd05171">
    <property type="entry name" value="PIKKc_ATM"/>
    <property type="match status" value="1"/>
</dbReference>
<dbReference type="Gene3D" id="1.10.1070.11">
    <property type="entry name" value="Phosphatidylinositol 3-/4-kinase, catalytic domain"/>
    <property type="match status" value="1"/>
</dbReference>
<dbReference type="Gene3D" id="3.30.1010.10">
    <property type="entry name" value="Phosphatidylinositol 3-kinase Catalytic Subunit, Chain A, domain 4"/>
    <property type="match status" value="1"/>
</dbReference>
<dbReference type="InterPro" id="IPR016024">
    <property type="entry name" value="ARM-type_fold"/>
</dbReference>
<dbReference type="InterPro" id="IPR038980">
    <property type="entry name" value="ATM_plant"/>
</dbReference>
<dbReference type="InterPro" id="IPR003152">
    <property type="entry name" value="FATC_dom"/>
</dbReference>
<dbReference type="InterPro" id="IPR001494">
    <property type="entry name" value="Importin-beta_N"/>
</dbReference>
<dbReference type="InterPro" id="IPR011009">
    <property type="entry name" value="Kinase-like_dom_sf"/>
</dbReference>
<dbReference type="InterPro" id="IPR000403">
    <property type="entry name" value="PI3/4_kinase_cat_dom"/>
</dbReference>
<dbReference type="InterPro" id="IPR036940">
    <property type="entry name" value="PI3/4_kinase_cat_sf"/>
</dbReference>
<dbReference type="InterPro" id="IPR018936">
    <property type="entry name" value="PI3/4_kinase_CS"/>
</dbReference>
<dbReference type="InterPro" id="IPR003151">
    <property type="entry name" value="PIK-rel_kinase_FAT"/>
</dbReference>
<dbReference type="InterPro" id="IPR014009">
    <property type="entry name" value="PIK_FAT"/>
</dbReference>
<dbReference type="InterPro" id="IPR044107">
    <property type="entry name" value="PIKKc_ATM"/>
</dbReference>
<dbReference type="InterPro" id="IPR021668">
    <property type="entry name" value="TAN"/>
</dbReference>
<dbReference type="PANTHER" id="PTHR37079">
    <property type="entry name" value="SERINE/THREONINE-PROTEIN KINASE ATM"/>
    <property type="match status" value="1"/>
</dbReference>
<dbReference type="PANTHER" id="PTHR37079:SF4">
    <property type="entry name" value="SERINE_THREONINE-PROTEIN KINASE ATM"/>
    <property type="match status" value="1"/>
</dbReference>
<dbReference type="Pfam" id="PF02259">
    <property type="entry name" value="FAT"/>
    <property type="match status" value="1"/>
</dbReference>
<dbReference type="Pfam" id="PF02260">
    <property type="entry name" value="FATC"/>
    <property type="match status" value="1"/>
</dbReference>
<dbReference type="Pfam" id="PF00454">
    <property type="entry name" value="PI3_PI4_kinase"/>
    <property type="match status" value="1"/>
</dbReference>
<dbReference type="Pfam" id="PF11640">
    <property type="entry name" value="TAN"/>
    <property type="match status" value="1"/>
</dbReference>
<dbReference type="SMART" id="SM01343">
    <property type="entry name" value="FATC"/>
    <property type="match status" value="1"/>
</dbReference>
<dbReference type="SMART" id="SM00146">
    <property type="entry name" value="PI3Kc"/>
    <property type="match status" value="1"/>
</dbReference>
<dbReference type="SMART" id="SM01342">
    <property type="entry name" value="TAN"/>
    <property type="match status" value="1"/>
</dbReference>
<dbReference type="SUPFAM" id="SSF48371">
    <property type="entry name" value="ARM repeat"/>
    <property type="match status" value="1"/>
</dbReference>
<dbReference type="SUPFAM" id="SSF56112">
    <property type="entry name" value="Protein kinase-like (PK-like)"/>
    <property type="match status" value="1"/>
</dbReference>
<dbReference type="PROSITE" id="PS51189">
    <property type="entry name" value="FAT"/>
    <property type="match status" value="1"/>
</dbReference>
<dbReference type="PROSITE" id="PS51190">
    <property type="entry name" value="FATC"/>
    <property type="match status" value="1"/>
</dbReference>
<dbReference type="PROSITE" id="PS00916">
    <property type="entry name" value="PI3_4_KINASE_2"/>
    <property type="match status" value="1"/>
</dbReference>
<dbReference type="PROSITE" id="PS50290">
    <property type="entry name" value="PI3_4_KINASE_3"/>
    <property type="match status" value="1"/>
</dbReference>
<comment type="function">
    <text evidence="1">Serine/threonine protein kinase which activates checkpoint signaling upon genotoxic stresses such as ionizing radiation (IR), ultraviolet light (UV), or DNA replication stalling, thereby acting as a DNA damage sensor. Recognizes the substrate consensus sequence [ST]-Q. Phosphorylates histone H2A to form H2AS128ph (gamma-H2A) at sites of DNA damage, involved in the regulation of DNA damage response mechanism. Required for the control of telomere length and genome stability (By similarity).</text>
</comment>
<comment type="catalytic activity">
    <reaction>
        <text>L-seryl-[protein] + ATP = O-phospho-L-seryl-[protein] + ADP + H(+)</text>
        <dbReference type="Rhea" id="RHEA:17989"/>
        <dbReference type="Rhea" id="RHEA-COMP:9863"/>
        <dbReference type="Rhea" id="RHEA-COMP:11604"/>
        <dbReference type="ChEBI" id="CHEBI:15378"/>
        <dbReference type="ChEBI" id="CHEBI:29999"/>
        <dbReference type="ChEBI" id="CHEBI:30616"/>
        <dbReference type="ChEBI" id="CHEBI:83421"/>
        <dbReference type="ChEBI" id="CHEBI:456216"/>
        <dbReference type="EC" id="2.7.11.1"/>
    </reaction>
</comment>
<comment type="catalytic activity">
    <reaction>
        <text>L-threonyl-[protein] + ATP = O-phospho-L-threonyl-[protein] + ADP + H(+)</text>
        <dbReference type="Rhea" id="RHEA:46608"/>
        <dbReference type="Rhea" id="RHEA-COMP:11060"/>
        <dbReference type="Rhea" id="RHEA-COMP:11605"/>
        <dbReference type="ChEBI" id="CHEBI:15378"/>
        <dbReference type="ChEBI" id="CHEBI:30013"/>
        <dbReference type="ChEBI" id="CHEBI:30616"/>
        <dbReference type="ChEBI" id="CHEBI:61977"/>
        <dbReference type="ChEBI" id="CHEBI:456216"/>
        <dbReference type="EC" id="2.7.11.1"/>
    </reaction>
</comment>
<comment type="subunit">
    <text evidence="1">Associates with DNA double-strand breaks.</text>
</comment>
<comment type="subcellular location">
    <subcellularLocation>
        <location evidence="1">Nucleus</location>
    </subcellularLocation>
    <subcellularLocation>
        <location evidence="1">Chromosome</location>
        <location evidence="1">Telomere</location>
    </subcellularLocation>
    <text evidence="1">Localizes to nuclear DNA repair foci with other DNA repair proteins in response to DNA double strand breaks.</text>
</comment>
<comment type="similarity">
    <text evidence="6">Belongs to the PI3/PI4-kinase family. ATM subfamily.</text>
</comment>
<comment type="sequence caution" evidence="6">
    <conflict type="erroneous gene model prediction">
        <sequence resource="EMBL-CDS" id="AAW44228"/>
    </conflict>
</comment>
<keyword id="KW-0067">ATP-binding</keyword>
<keyword id="KW-0156">Chromatin regulator</keyword>
<keyword id="KW-0158">Chromosome</keyword>
<keyword id="KW-0227">DNA damage</keyword>
<keyword id="KW-0418">Kinase</keyword>
<keyword id="KW-0547">Nucleotide-binding</keyword>
<keyword id="KW-0539">Nucleus</keyword>
<keyword id="KW-1185">Reference proteome</keyword>
<keyword id="KW-0723">Serine/threonine-protein kinase</keyword>
<keyword id="KW-0779">Telomere</keyword>
<keyword id="KW-0808">Transferase</keyword>
<sequence>MDSVSGLHAALSLCASDSAKDRARAHALLPPIFANAQNLRVFQAAAATHGGAPWLALFHCLFRAVALEKRAVLRGSSNAQAAARLAHAIRIVRLVAEQAVHLIARKPLIALVAHMRHQLVLPPRIFAPALLDYSKALSTLLAYPPHVESLDRHTWLALMSMCFAAILGDDLVSDDQMDDADMLGVAAELERLDAENVPPHRPPVTLNTSSLVQIIPALLCSTVSPIVPPTMKSGDTLTAGQKVGLGIVLKIRRFFTMYPHVTIYHLHLLTALNTVLSDMELNCRDLFLLGSVKIFPHLVTLWAAPERDRDRRIPEQIAIAIHRILPHLAHSAELQGAQDVTENVERLMEMLAKESTMSRGIEPLDLGSMRLKTVAARGRHHFAACPFETRSFSAGHHFTVDHALSWTAIEIYCDACLHLYQTRAFPSTATPSRQSTPSKRRKLENPLASLVSAVGMGRPESRLIALQTLVFVIDRHWSKLAKDIQSDIRRTLVSLLTDDSETLQSWAYIALSTIILSSYTAGANENNNDENNNDGQSQDDWKQVWSFALRKCHLPGPSRSASHAAAVLLQFDKVDSPSTIRGIQTMLTTIAVQGPPTAHDSVCALYSIALEAARSDIQLYSLNLEEQVLSWLEKTFAREKFERDKMDQRLDQATPGDILRLFSAVSRIQYHVPLAEPVTKEFLPDSAVVSYALERAKTQPIRDFLLYHTCPTPPPPPPPLDDSHTTPLLAASENHSTFLGGRPRRLSELLLSILNATTAQWETKPVISSGERPRRCVDLVALGLAFQGLLQLDGYIPHAACINAAIRLLHLLKPSLTSSDLSIPSLDLVWRGLRCLADVPLAKEEEEEEEEDWPILVKPDVQSGIRQDLLPPTMYDTPPQEEEAESSDPPKRFTQYPPTFPSTLLPTPTPITPSSLSTFQSQSNSASLVHAIWRLPDVSAALQGLFSVCLQVITRSSSSTSSGQPTQLSHHEDDDGEDDDDDFAVASGETTSAPLPEKAAELRASTSLLRSAVAFRLQGVMLVSAGAGGGAQSKAYKDTQLVNSFLQADGLRAVEIGWAICEAMQKGWLRLGIDAVDLVVASLGNMLNSYGYARDERLLQLCLEFLKCSAPVWMGNDHSNDDDLKDEAMRLVCYIATKITAGSITSWRVRLAMLRFIEAFLHYDSASKLWADCMVQEEAEEEEDDVSMEDENHLFHYIAQSLSDPDMRVRARAATTAASALYRPSIHPSEHPIIYDQVSNSQAGDPTFAEHYLSYVLWKLNCCIASAKQRQTVIFDLYEAAIGGTEYSDHLQAGLNAVARRLGLPSITALYLPYAPTTTISHDTSRSSAITFVLNTTHRLFGLSNRSAFFTACLEHAGAYMLYCGKIGLFTSACDAAGVLPEDLALQLSVAAAAMAMALPLSNDKATNVSMNKCKAEALALLSSFPGISGPDAAEEFLHSYANGVAAHLWELMDLESSVDEIVAWFDKTEKESAAGIAFAQMMAHDNAKTGRVKAINPAASFQSIHNVCRFLEKNYSSISLHAFTFAAILRLTSLINNAFLVSEQRRYLRALAMLLSVHQGTLQRPLIWEAFLTETITLLLQPDICRTVLSMVMWAFDWLESLSSTPSKLVNIFCQLGEIRIELGGSGTPGSQPNQMGDALEDWIVKMSPKWFKSQISQEAFERAVALWPDSLRSRLSVHASPLSLRDLDDLSQNDAVHNAGQLCKHFLHLADADHGQDVVSVFVDSTFWSLKDKISSVWDKEGINAFQDLLYLCNGEVRAPSLNFYGQDTFSKALNATTGEHKKTEAMNALYHAMCKTMVQLLHDRRPQIRSAAYRCLQRMKPILTGKDLKELPADVSDVVPILVPIPIGSVRQSQAMKLDGVINNATWNKKAEHFATWSLELSRLLCKTASQHDKFFLSFEPLLSTPLLPLHHFLGHFVHAALVCSRSMSSERSKAISEHFETVLQNPFASIEAVRSIVNIVLQLRRYEHPFTSGMLGYNAWLSVNFVDLSKAAVKCGLYVSALLFLELANDQGESLDLAEPRVRQIMYDIYSNVEDPDGFYGIHNKDIRDSLRRRLEHEGLSWQALGWAGAVYNVDGNDSRSAIPVLHHLHDIGLSRLASVVATETRTSGSVPLDDPFFADLSWRTGDWNLPIGRESSATSSGLLYSALSAVHRSKSYESASKIVDKAVRAEMTRLGGLQKEMLTSIQSTVTNLLCLRELNRWLDPQLQQGMQEVIDKGTLRDLQDINDKFEFASAERIIATRLSVFDSVKQRESQDMIGDALTPKMELVTKAESTCHIKLSRLALKSNNLQAAINSLTALQKLQTYVGVIDEAQDVFCEVLWKQGEHTLAIQLLEDLLLREKEKKSKGQRIPALEGRLAHWASEARLKAANEIFGMFSNVTKSIKRSTADVSEHAEIFYQFACFADKQYVSQSSSADVKQLKEYSKLRASQALRLSARQSRARESDQKDSAVREAERDEEKLKKFEMQQKQYLNAALQFYAEAVSMSDNFNDCITRLVTLWLENDENEESNVTFSRAAHKVPSYKFIFLGPQLAARLHRPESPTIFNSTLNGLMFRMSQDHPYHTLYHVIPLLWEHKQPQSTNSSMLGRKSAADDIMRRLASSASNRLAVGAAKSMKRFVAIAMEWTSFFEKDKRLEYKLPSDSPLRKAPRDIPVATSTPSIDVTCQYKDIATFDHFSEWYTRAGGLSRPKVMTCFDSNGQKYTQLFKKDDGFRQDAVMEQIFVLVNDLLNRNRQTRSRKLRYRTYGVLALPEATGVIEFVVGTKPLIKYLPPAHEKYHPKDITSHDFLKAMQEVQSVKNNDEKIIQVWTKLKKRFRPVMRHLFTEKYRDPMAWFSMRLTYARSLAVTSIVGWVLEIGDRHCSNILMDECTGELVHIDFGIAFGAGRILPIPELVPFRLTDDLVDALGVTGVNGTFRQCSQLVLQTLIDSSDVILTILEVFKQDPLHTWMVDDKMKKAQDGNHKMYPERGQEKADRIMRETRENLSKELSVQYRVNQLIQEARDVNNLATIFRGWHSWL</sequence>
<organism>
    <name type="scientific">Cryptococcus neoformans var. neoformans serotype D (strain JEC21 / ATCC MYA-565)</name>
    <name type="common">Filobasidiella neoformans</name>
    <dbReference type="NCBI Taxonomy" id="214684"/>
    <lineage>
        <taxon>Eukaryota</taxon>
        <taxon>Fungi</taxon>
        <taxon>Dikarya</taxon>
        <taxon>Basidiomycota</taxon>
        <taxon>Agaricomycotina</taxon>
        <taxon>Tremellomycetes</taxon>
        <taxon>Tremellales</taxon>
        <taxon>Cryptococcaceae</taxon>
        <taxon>Cryptococcus</taxon>
        <taxon>Cryptococcus neoformans species complex</taxon>
    </lineage>
</organism>
<gene>
    <name type="primary">TEL1</name>
    <name type="ordered locus">CNF02070</name>
</gene>
<feature type="chain" id="PRO_0000227700" description="Serine/threonine-protein kinase TEL1">
    <location>
        <begin position="1"/>
        <end position="3023"/>
    </location>
</feature>
<feature type="domain" description="FAT" evidence="3">
    <location>
        <begin position="1991"/>
        <end position="2579"/>
    </location>
</feature>
<feature type="domain" description="PI3K/PI4K catalytic" evidence="2">
    <location>
        <begin position="2681"/>
        <end position="2993"/>
    </location>
</feature>
<feature type="domain" description="FATC" evidence="3 4">
    <location>
        <begin position="2987"/>
        <end position="3023"/>
    </location>
</feature>
<feature type="region of interest" description="Disordered" evidence="5">
    <location>
        <begin position="867"/>
        <end position="919"/>
    </location>
</feature>
<feature type="region of interest" description="Disordered" evidence="5">
    <location>
        <begin position="957"/>
        <end position="996"/>
    </location>
</feature>
<feature type="region of interest" description="Disordered" evidence="5">
    <location>
        <begin position="2441"/>
        <end position="2463"/>
    </location>
</feature>
<feature type="region of interest" description="G-loop" evidence="2">
    <location>
        <begin position="2687"/>
        <end position="2693"/>
    </location>
</feature>
<feature type="region of interest" description="Catalytic loop" evidence="2">
    <location>
        <begin position="2860"/>
        <end position="2868"/>
    </location>
</feature>
<feature type="region of interest" description="Activation loop" evidence="2">
    <location>
        <begin position="2880"/>
        <end position="2904"/>
    </location>
</feature>
<feature type="compositionally biased region" description="Low complexity" evidence="5">
    <location>
        <begin position="901"/>
        <end position="919"/>
    </location>
</feature>
<feature type="compositionally biased region" description="Acidic residues" evidence="5">
    <location>
        <begin position="974"/>
        <end position="983"/>
    </location>
</feature>
<feature type="compositionally biased region" description="Basic and acidic residues" evidence="5">
    <location>
        <begin position="2445"/>
        <end position="2463"/>
    </location>
</feature>